<protein>
    <recommendedName>
        <fullName evidence="1">ATP synthase subunit beta</fullName>
        <ecNumber evidence="1">7.1.2.2</ecNumber>
    </recommendedName>
    <alternativeName>
        <fullName evidence="1">ATP synthase F1 sector subunit beta</fullName>
    </alternativeName>
    <alternativeName>
        <fullName evidence="1">F-ATPase subunit beta</fullName>
    </alternativeName>
</protein>
<organism>
    <name type="scientific">Synechococcus sp. (strain PCC 6716)</name>
    <dbReference type="NCBI Taxonomy" id="32048"/>
    <lineage>
        <taxon>Bacteria</taxon>
        <taxon>Bacillati</taxon>
        <taxon>Cyanobacteriota</taxon>
        <taxon>Cyanophyceae</taxon>
        <taxon>Synechococcales</taxon>
        <taxon>Synechococcaceae</taxon>
        <taxon>Synechococcus</taxon>
    </lineage>
</organism>
<name>ATPB_SYNP1</name>
<evidence type="ECO:0000255" key="1">
    <source>
        <dbReference type="HAMAP-Rule" id="MF_01347"/>
    </source>
</evidence>
<sequence>MVTTAERTNVGFITQVIGPVIDIEFPSGKMPAIYNALRIQGKNAAGLDVAVTCEVQQLLGDNRVRAVAMSSTDGLVRGMEAVDTGAPISVPVGTATLGRIFNVLGEPVDEKGEVNISETLPIHRPAPSFTELETKPSVFETGIKVIDLLTPYRRGGKIGLFGGAGVGKTVIMMELINNIATQHGGVSVFAGVGERTREGNDLYNEMIESGVIDKDDPSKSKIALVYGQMNEPPGARMRVGLSGLTMAEYFRDVNKQDVLLFVDNIFRFVQAGSEVSALLGRMPSAVGYQPTLGTDVGALQERITSTMEGSITSIQAVYVPADDLTDPAPATTFAHLDGTTVLSRGLAAKGIYPAVDPLGSTSNMLQPDIVGSEHYQTARAVQATLQRYKELQDIIAILGLDELSEEDRLTVARARKVERFLSQPFFVAEVFTGAPGKYVTLEETIKGFQMILSGELDDLPEQAFYMVGNIEEAKAKAEKLKA</sequence>
<feature type="chain" id="PRO_0000144481" description="ATP synthase subunit beta">
    <location>
        <begin position="1"/>
        <end position="482"/>
    </location>
</feature>
<feature type="binding site" evidence="1">
    <location>
        <begin position="162"/>
        <end position="169"/>
    </location>
    <ligand>
        <name>ATP</name>
        <dbReference type="ChEBI" id="CHEBI:30616"/>
    </ligand>
</feature>
<accession>Q05373</accession>
<proteinExistence type="evidence at protein level"/>
<gene>
    <name evidence="1" type="primary">atpD</name>
    <name evidence="1" type="synonym">atpB</name>
</gene>
<reference key="1">
    <citation type="journal article" date="1993" name="Biochem. J.">
        <title>Organization and sequences of genes for the subunits of ATP synthase in the thermophilic cyanobacterium Synechococcus 6716.</title>
        <authorList>
            <person name="van Walraven H.S."/>
            <person name="Lutter R."/>
            <person name="Walker J.E."/>
        </authorList>
    </citation>
    <scope>NUCLEOTIDE SEQUENCE [GENOMIC DNA]</scope>
    <scope>PROTEIN SEQUENCE OF 1-10</scope>
</reference>
<comment type="function">
    <text evidence="1">Produces ATP from ADP in the presence of a proton gradient across the membrane. The catalytic sites are hosted primarily by the beta subunits.</text>
</comment>
<comment type="catalytic activity">
    <reaction evidence="1">
        <text>ATP + H2O + 4 H(+)(in) = ADP + phosphate + 5 H(+)(out)</text>
        <dbReference type="Rhea" id="RHEA:57720"/>
        <dbReference type="ChEBI" id="CHEBI:15377"/>
        <dbReference type="ChEBI" id="CHEBI:15378"/>
        <dbReference type="ChEBI" id="CHEBI:30616"/>
        <dbReference type="ChEBI" id="CHEBI:43474"/>
        <dbReference type="ChEBI" id="CHEBI:456216"/>
        <dbReference type="EC" id="7.1.2.2"/>
    </reaction>
</comment>
<comment type="subunit">
    <text evidence="1">F-type ATPases have 2 components, CF(1) - the catalytic core - and CF(0) - the membrane proton channel. CF(1) has five subunits: alpha(3), beta(3), gamma(1), delta(1), epsilon(1). CF(0) has four main subunits: a(1), b(1), b'(1) and c(9-12).</text>
</comment>
<comment type="subcellular location">
    <subcellularLocation>
        <location evidence="1">Cellular thylakoid membrane</location>
        <topology evidence="1">Peripheral membrane protein</topology>
    </subcellularLocation>
</comment>
<comment type="similarity">
    <text evidence="1">Belongs to the ATPase alpha/beta chains family.</text>
</comment>
<keyword id="KW-0066">ATP synthesis</keyword>
<keyword id="KW-0067">ATP-binding</keyword>
<keyword id="KW-0139">CF(1)</keyword>
<keyword id="KW-0903">Direct protein sequencing</keyword>
<keyword id="KW-0375">Hydrogen ion transport</keyword>
<keyword id="KW-0406">Ion transport</keyword>
<keyword id="KW-0472">Membrane</keyword>
<keyword id="KW-0547">Nucleotide-binding</keyword>
<keyword id="KW-0793">Thylakoid</keyword>
<keyword id="KW-1278">Translocase</keyword>
<keyword id="KW-0813">Transport</keyword>
<dbReference type="EC" id="7.1.2.2" evidence="1"/>
<dbReference type="EMBL" id="X70432">
    <property type="protein sequence ID" value="CAA49882.1"/>
    <property type="molecule type" value="Genomic_DNA"/>
</dbReference>
<dbReference type="SMR" id="Q05373"/>
<dbReference type="GO" id="GO:0031676">
    <property type="term" value="C:plasma membrane-derived thylakoid membrane"/>
    <property type="evidence" value="ECO:0007669"/>
    <property type="project" value="UniProtKB-SubCell"/>
</dbReference>
<dbReference type="GO" id="GO:0045259">
    <property type="term" value="C:proton-transporting ATP synthase complex"/>
    <property type="evidence" value="ECO:0007669"/>
    <property type="project" value="UniProtKB-KW"/>
</dbReference>
<dbReference type="GO" id="GO:0005524">
    <property type="term" value="F:ATP binding"/>
    <property type="evidence" value="ECO:0007669"/>
    <property type="project" value="UniProtKB-UniRule"/>
</dbReference>
<dbReference type="GO" id="GO:0016887">
    <property type="term" value="F:ATP hydrolysis activity"/>
    <property type="evidence" value="ECO:0007669"/>
    <property type="project" value="InterPro"/>
</dbReference>
<dbReference type="GO" id="GO:0046933">
    <property type="term" value="F:proton-transporting ATP synthase activity, rotational mechanism"/>
    <property type="evidence" value="ECO:0007669"/>
    <property type="project" value="UniProtKB-UniRule"/>
</dbReference>
<dbReference type="CDD" id="cd18110">
    <property type="entry name" value="ATP-synt_F1_beta_C"/>
    <property type="match status" value="1"/>
</dbReference>
<dbReference type="CDD" id="cd18115">
    <property type="entry name" value="ATP-synt_F1_beta_N"/>
    <property type="match status" value="1"/>
</dbReference>
<dbReference type="CDD" id="cd01133">
    <property type="entry name" value="F1-ATPase_beta_CD"/>
    <property type="match status" value="1"/>
</dbReference>
<dbReference type="FunFam" id="1.10.1140.10:FF:000001">
    <property type="entry name" value="ATP synthase subunit beta"/>
    <property type="match status" value="1"/>
</dbReference>
<dbReference type="FunFam" id="3.40.50.300:FF:000004">
    <property type="entry name" value="ATP synthase subunit beta"/>
    <property type="match status" value="1"/>
</dbReference>
<dbReference type="FunFam" id="2.40.10.170:FF:000002">
    <property type="entry name" value="ATP synthase subunit beta, chloroplastic"/>
    <property type="match status" value="1"/>
</dbReference>
<dbReference type="Gene3D" id="2.40.10.170">
    <property type="match status" value="1"/>
</dbReference>
<dbReference type="Gene3D" id="1.10.1140.10">
    <property type="entry name" value="Bovine Mitochondrial F1-atpase, Atp Synthase Beta Chain, Chain D, domain 3"/>
    <property type="match status" value="1"/>
</dbReference>
<dbReference type="Gene3D" id="3.40.50.300">
    <property type="entry name" value="P-loop containing nucleotide triphosphate hydrolases"/>
    <property type="match status" value="1"/>
</dbReference>
<dbReference type="HAMAP" id="MF_01347">
    <property type="entry name" value="ATP_synth_beta_bact"/>
    <property type="match status" value="1"/>
</dbReference>
<dbReference type="InterPro" id="IPR003593">
    <property type="entry name" value="AAA+_ATPase"/>
</dbReference>
<dbReference type="InterPro" id="IPR055190">
    <property type="entry name" value="ATP-synt_VA_C"/>
</dbReference>
<dbReference type="InterPro" id="IPR005722">
    <property type="entry name" value="ATP_synth_F1_bsu"/>
</dbReference>
<dbReference type="InterPro" id="IPR020003">
    <property type="entry name" value="ATPase_a/bsu_AS"/>
</dbReference>
<dbReference type="InterPro" id="IPR050053">
    <property type="entry name" value="ATPase_alpha/beta_chains"/>
</dbReference>
<dbReference type="InterPro" id="IPR004100">
    <property type="entry name" value="ATPase_F1/V1/A1_a/bsu_N"/>
</dbReference>
<dbReference type="InterPro" id="IPR036121">
    <property type="entry name" value="ATPase_F1/V1/A1_a/bsu_N_sf"/>
</dbReference>
<dbReference type="InterPro" id="IPR000194">
    <property type="entry name" value="ATPase_F1/V1/A1_a/bsu_nucl-bd"/>
</dbReference>
<dbReference type="InterPro" id="IPR024034">
    <property type="entry name" value="ATPase_F1/V1_b/a_C"/>
</dbReference>
<dbReference type="InterPro" id="IPR027417">
    <property type="entry name" value="P-loop_NTPase"/>
</dbReference>
<dbReference type="NCBIfam" id="TIGR01039">
    <property type="entry name" value="atpD"/>
    <property type="match status" value="1"/>
</dbReference>
<dbReference type="PANTHER" id="PTHR15184">
    <property type="entry name" value="ATP SYNTHASE"/>
    <property type="match status" value="1"/>
</dbReference>
<dbReference type="PANTHER" id="PTHR15184:SF71">
    <property type="entry name" value="ATP SYNTHASE SUBUNIT BETA, MITOCHONDRIAL"/>
    <property type="match status" value="1"/>
</dbReference>
<dbReference type="Pfam" id="PF00006">
    <property type="entry name" value="ATP-synt_ab"/>
    <property type="match status" value="1"/>
</dbReference>
<dbReference type="Pfam" id="PF02874">
    <property type="entry name" value="ATP-synt_ab_N"/>
    <property type="match status" value="1"/>
</dbReference>
<dbReference type="Pfam" id="PF22919">
    <property type="entry name" value="ATP-synt_VA_C"/>
    <property type="match status" value="1"/>
</dbReference>
<dbReference type="SMART" id="SM00382">
    <property type="entry name" value="AAA"/>
    <property type="match status" value="1"/>
</dbReference>
<dbReference type="SUPFAM" id="SSF47917">
    <property type="entry name" value="C-terminal domain of alpha and beta subunits of F1 ATP synthase"/>
    <property type="match status" value="1"/>
</dbReference>
<dbReference type="SUPFAM" id="SSF50615">
    <property type="entry name" value="N-terminal domain of alpha and beta subunits of F1 ATP synthase"/>
    <property type="match status" value="1"/>
</dbReference>
<dbReference type="SUPFAM" id="SSF52540">
    <property type="entry name" value="P-loop containing nucleoside triphosphate hydrolases"/>
    <property type="match status" value="1"/>
</dbReference>
<dbReference type="PROSITE" id="PS00152">
    <property type="entry name" value="ATPASE_ALPHA_BETA"/>
    <property type="match status" value="1"/>
</dbReference>